<evidence type="ECO:0000255" key="1">
    <source>
        <dbReference type="HAMAP-Rule" id="MF_00948"/>
    </source>
</evidence>
<proteinExistence type="inferred from homology"/>
<keyword id="KW-0804">Transcription</keyword>
<keyword id="KW-0889">Transcription antitermination</keyword>
<keyword id="KW-0805">Transcription regulation</keyword>
<keyword id="KW-0806">Transcription termination</keyword>
<comment type="function">
    <text evidence="1">Participates in transcription elongation, termination and antitermination.</text>
</comment>
<comment type="similarity">
    <text evidence="1">Belongs to the NusG family.</text>
</comment>
<sequence length="182" mass="20664">MSEEVGAKRWYAVHTYSGYENKVKKNLEKRVESMNMTEQIFRVVIPEEEETQVKDGKAKTTVKKTFPGYVLVELIMTDESWYVVRNTPGVTGFVGSAGAGSKPNPLLPEEVRFILKQMGLKEKTIDVELEVGEQVRIKSGPFANQVGEVQEIETDKFKLTVLVDMFGRETPVEVEFDQIEKL</sequence>
<gene>
    <name evidence="1" type="primary">nusG</name>
    <name type="ordered locus">NWMN_0498</name>
</gene>
<reference key="1">
    <citation type="submission" date="2000-12" db="EMBL/GenBank/DDBJ databases">
        <title>The sigH locus of Staphylococcus aureus involved in methicillin resistance.</title>
        <authorList>
            <person name="Bischoff M."/>
        </authorList>
    </citation>
    <scope>NUCLEOTIDE SEQUENCE [GENOMIC DNA]</scope>
</reference>
<reference key="2">
    <citation type="journal article" date="2008" name="J. Bacteriol.">
        <title>Genome sequence of Staphylococcus aureus strain Newman and comparative analysis of staphylococcal genomes: polymorphism and evolution of two major pathogenicity islands.</title>
        <authorList>
            <person name="Baba T."/>
            <person name="Bae T."/>
            <person name="Schneewind O."/>
            <person name="Takeuchi F."/>
            <person name="Hiramatsu K."/>
        </authorList>
    </citation>
    <scope>NUCLEOTIDE SEQUENCE [LARGE SCALE GENOMIC DNA]</scope>
    <source>
        <strain>Newman</strain>
    </source>
</reference>
<organism>
    <name type="scientific">Staphylococcus aureus (strain Newman)</name>
    <dbReference type="NCBI Taxonomy" id="426430"/>
    <lineage>
        <taxon>Bacteria</taxon>
        <taxon>Bacillati</taxon>
        <taxon>Bacillota</taxon>
        <taxon>Bacilli</taxon>
        <taxon>Bacillales</taxon>
        <taxon>Staphylococcaceae</taxon>
        <taxon>Staphylococcus</taxon>
    </lineage>
</organism>
<dbReference type="EMBL" id="AF327733">
    <property type="protein sequence ID" value="AAK15310.1"/>
    <property type="molecule type" value="Genomic_DNA"/>
</dbReference>
<dbReference type="EMBL" id="AP009351">
    <property type="protein sequence ID" value="BAF66770.1"/>
    <property type="molecule type" value="Genomic_DNA"/>
</dbReference>
<dbReference type="RefSeq" id="WP_001288302.1">
    <property type="nucleotide sequence ID" value="NZ_JBBIAE010000002.1"/>
</dbReference>
<dbReference type="SMR" id="P0C1S3"/>
<dbReference type="KEGG" id="sae:NWMN_0498"/>
<dbReference type="HOGENOM" id="CLU_067287_1_1_9"/>
<dbReference type="Proteomes" id="UP000006386">
    <property type="component" value="Chromosome"/>
</dbReference>
<dbReference type="GO" id="GO:0005829">
    <property type="term" value="C:cytosol"/>
    <property type="evidence" value="ECO:0007669"/>
    <property type="project" value="TreeGrafter"/>
</dbReference>
<dbReference type="GO" id="GO:0006353">
    <property type="term" value="P:DNA-templated transcription termination"/>
    <property type="evidence" value="ECO:0007669"/>
    <property type="project" value="UniProtKB-UniRule"/>
</dbReference>
<dbReference type="GO" id="GO:0032784">
    <property type="term" value="P:regulation of DNA-templated transcription elongation"/>
    <property type="evidence" value="ECO:0007669"/>
    <property type="project" value="InterPro"/>
</dbReference>
<dbReference type="GO" id="GO:0031564">
    <property type="term" value="P:transcription antitermination"/>
    <property type="evidence" value="ECO:0007669"/>
    <property type="project" value="UniProtKB-UniRule"/>
</dbReference>
<dbReference type="GO" id="GO:0140673">
    <property type="term" value="P:transcription elongation-coupled chromatin remodeling"/>
    <property type="evidence" value="ECO:0007669"/>
    <property type="project" value="InterPro"/>
</dbReference>
<dbReference type="CDD" id="cd06091">
    <property type="entry name" value="KOW_NusG"/>
    <property type="match status" value="1"/>
</dbReference>
<dbReference type="CDD" id="cd09891">
    <property type="entry name" value="NGN_Bact_1"/>
    <property type="match status" value="1"/>
</dbReference>
<dbReference type="FunFam" id="2.30.30.30:FF:000002">
    <property type="entry name" value="Transcription termination/antitermination factor NusG"/>
    <property type="match status" value="1"/>
</dbReference>
<dbReference type="FunFam" id="3.30.70.940:FF:000002">
    <property type="entry name" value="Transcription termination/antitermination protein NusG"/>
    <property type="match status" value="1"/>
</dbReference>
<dbReference type="Gene3D" id="2.30.30.30">
    <property type="match status" value="1"/>
</dbReference>
<dbReference type="Gene3D" id="3.30.70.940">
    <property type="entry name" value="NusG, N-terminal domain"/>
    <property type="match status" value="1"/>
</dbReference>
<dbReference type="HAMAP" id="MF_00948">
    <property type="entry name" value="NusG"/>
    <property type="match status" value="1"/>
</dbReference>
<dbReference type="InterPro" id="IPR005824">
    <property type="entry name" value="KOW"/>
</dbReference>
<dbReference type="InterPro" id="IPR047050">
    <property type="entry name" value="NGN"/>
</dbReference>
<dbReference type="InterPro" id="IPR006645">
    <property type="entry name" value="NGN-like_dom"/>
</dbReference>
<dbReference type="InterPro" id="IPR036735">
    <property type="entry name" value="NGN_dom_sf"/>
</dbReference>
<dbReference type="InterPro" id="IPR043425">
    <property type="entry name" value="NusG-like"/>
</dbReference>
<dbReference type="InterPro" id="IPR014722">
    <property type="entry name" value="Rib_uL2_dom2"/>
</dbReference>
<dbReference type="InterPro" id="IPR001062">
    <property type="entry name" value="Transcrpt_antiterm_NusG"/>
</dbReference>
<dbReference type="InterPro" id="IPR015869">
    <property type="entry name" value="Transcrpt_antiterm_NusG_bac_CS"/>
</dbReference>
<dbReference type="InterPro" id="IPR008991">
    <property type="entry name" value="Translation_prot_SH3-like_sf"/>
</dbReference>
<dbReference type="NCBIfam" id="TIGR00922">
    <property type="entry name" value="nusG"/>
    <property type="match status" value="1"/>
</dbReference>
<dbReference type="PANTHER" id="PTHR30265">
    <property type="entry name" value="RHO-INTERACTING TRANSCRIPTION TERMINATION FACTOR NUSG"/>
    <property type="match status" value="1"/>
</dbReference>
<dbReference type="PANTHER" id="PTHR30265:SF2">
    <property type="entry name" value="TRANSCRIPTION TERMINATION_ANTITERMINATION PROTEIN NUSG"/>
    <property type="match status" value="1"/>
</dbReference>
<dbReference type="Pfam" id="PF00467">
    <property type="entry name" value="KOW"/>
    <property type="match status" value="1"/>
</dbReference>
<dbReference type="Pfam" id="PF02357">
    <property type="entry name" value="NusG"/>
    <property type="match status" value="1"/>
</dbReference>
<dbReference type="PRINTS" id="PR00338">
    <property type="entry name" value="NUSGTNSCPFCT"/>
</dbReference>
<dbReference type="SMART" id="SM00739">
    <property type="entry name" value="KOW"/>
    <property type="match status" value="1"/>
</dbReference>
<dbReference type="SMART" id="SM00738">
    <property type="entry name" value="NGN"/>
    <property type="match status" value="1"/>
</dbReference>
<dbReference type="SUPFAM" id="SSF82679">
    <property type="entry name" value="N-utilization substance G protein NusG, N-terminal domain"/>
    <property type="match status" value="1"/>
</dbReference>
<dbReference type="SUPFAM" id="SSF50104">
    <property type="entry name" value="Translation proteins SH3-like domain"/>
    <property type="match status" value="1"/>
</dbReference>
<dbReference type="PROSITE" id="PS01014">
    <property type="entry name" value="NUSG"/>
    <property type="match status" value="1"/>
</dbReference>
<feature type="chain" id="PRO_0000113946" description="Transcription termination/antitermination protein NusG">
    <location>
        <begin position="1"/>
        <end position="182"/>
    </location>
</feature>
<feature type="domain" description="KOW" evidence="1">
    <location>
        <begin position="131"/>
        <end position="163"/>
    </location>
</feature>
<protein>
    <recommendedName>
        <fullName evidence="1">Transcription termination/antitermination protein NusG</fullName>
    </recommendedName>
</protein>
<name>NUSG_STAAE</name>
<accession>P0C1S3</accession>
<accession>A6QEI8</accession>
<accession>O08386</accession>
<accession>P0A098</accession>